<reference key="1">
    <citation type="journal article" date="2006" name="J. Bacteriol.">
        <title>The genome sequence of Methanosphaera stadtmanae reveals why this human intestinal archaeon is restricted to methanol and H2 for methane formation and ATP synthesis.</title>
        <authorList>
            <person name="Fricke W.F."/>
            <person name="Seedorf H."/>
            <person name="Henne A."/>
            <person name="Kruer M."/>
            <person name="Liesegang H."/>
            <person name="Hedderich R."/>
            <person name="Gottschalk G."/>
            <person name="Thauer R.K."/>
        </authorList>
    </citation>
    <scope>NUCLEOTIDE SEQUENCE [LARGE SCALE GENOMIC DNA]</scope>
    <source>
        <strain>ATCC 43021 / DSM 3091 / JCM 11832 / MCB-3</strain>
    </source>
</reference>
<evidence type="ECO:0000255" key="1">
    <source>
        <dbReference type="HAMAP-Rule" id="MF_00751"/>
    </source>
</evidence>
<protein>
    <recommendedName>
        <fullName evidence="1">Preprotein translocase subunit SecG</fullName>
    </recommendedName>
    <alternativeName>
        <fullName evidence="1">Protein transport protein Sec61 subunit beta homolog</fullName>
    </alternativeName>
</protein>
<proteinExistence type="inferred from homology"/>
<comment type="function">
    <text evidence="1">Involved in protein export. The function of the beta subunit is unknown, but it may be involved in stabilization of the trimeric complex.</text>
</comment>
<comment type="subunit">
    <text evidence="1">Component of the protein translocase complex. Heterotrimer consisting of alpha (SecY), beta (SecG) and gamma (SecE) subunits. Can form oligomers of the heterotrimer.</text>
</comment>
<comment type="subcellular location">
    <subcellularLocation>
        <location evidence="1">Cell membrane</location>
        <topology evidence="1">Single-pass membrane protein</topology>
    </subcellularLocation>
</comment>
<comment type="similarity">
    <text evidence="1">Belongs to the SEC61-beta family.</text>
</comment>
<feature type="chain" id="PRO_1000046578" description="Preprotein translocase subunit SecG">
    <location>
        <begin position="1"/>
        <end position="56"/>
    </location>
</feature>
<feature type="topological domain" description="Cytoplasmic" evidence="1">
    <location>
        <begin position="1"/>
        <end position="30"/>
    </location>
</feature>
<feature type="transmembrane region" description="Helical" evidence="1">
    <location>
        <begin position="31"/>
        <end position="52"/>
    </location>
</feature>
<feature type="topological domain" description="Extracellular" evidence="1">
    <location>
        <begin position="53"/>
        <end position="56"/>
    </location>
</feature>
<keyword id="KW-1003">Cell membrane</keyword>
<keyword id="KW-0472">Membrane</keyword>
<keyword id="KW-0653">Protein transport</keyword>
<keyword id="KW-1185">Reference proteome</keyword>
<keyword id="KW-0811">Translocation</keyword>
<keyword id="KW-0812">Transmembrane</keyword>
<keyword id="KW-1133">Transmembrane helix</keyword>
<keyword id="KW-0813">Transport</keyword>
<organism>
    <name type="scientific">Methanosphaera stadtmanae (strain ATCC 43021 / DSM 3091 / JCM 11832 / MCB-3)</name>
    <dbReference type="NCBI Taxonomy" id="339860"/>
    <lineage>
        <taxon>Archaea</taxon>
        <taxon>Methanobacteriati</taxon>
        <taxon>Methanobacteriota</taxon>
        <taxon>Methanomada group</taxon>
        <taxon>Methanobacteria</taxon>
        <taxon>Methanobacteriales</taxon>
        <taxon>Methanobacteriaceae</taxon>
        <taxon>Methanosphaera</taxon>
    </lineage>
</organism>
<accession>Q2NHI7</accession>
<sequence>MARKDKKTLPASGAGIVRYFNDDTAGVKLSPKQVVIGTIIVALICIALRFTTSVGY</sequence>
<name>SECG_METST</name>
<gene>
    <name evidence="1" type="primary">secG</name>
    <name type="ordered locus">Msp_0229</name>
</gene>
<dbReference type="EMBL" id="CP000102">
    <property type="protein sequence ID" value="ABC56646.1"/>
    <property type="molecule type" value="Genomic_DNA"/>
</dbReference>
<dbReference type="RefSeq" id="WP_011405845.1">
    <property type="nucleotide sequence ID" value="NC_007681.1"/>
</dbReference>
<dbReference type="SMR" id="Q2NHI7"/>
<dbReference type="STRING" id="339860.Msp_0229"/>
<dbReference type="KEGG" id="mst:Msp_0229"/>
<dbReference type="eggNOG" id="arCOG02957">
    <property type="taxonomic scope" value="Archaea"/>
</dbReference>
<dbReference type="HOGENOM" id="CLU_208205_3_1_2"/>
<dbReference type="OrthoDB" id="43651at2157"/>
<dbReference type="Proteomes" id="UP000001931">
    <property type="component" value="Chromosome"/>
</dbReference>
<dbReference type="GO" id="GO:0005886">
    <property type="term" value="C:plasma membrane"/>
    <property type="evidence" value="ECO:0007669"/>
    <property type="project" value="UniProtKB-SubCell"/>
</dbReference>
<dbReference type="GO" id="GO:0015031">
    <property type="term" value="P:protein transport"/>
    <property type="evidence" value="ECO:0007669"/>
    <property type="project" value="UniProtKB-UniRule"/>
</dbReference>
<dbReference type="HAMAP" id="MF_00751">
    <property type="entry name" value="SecG"/>
    <property type="match status" value="1"/>
</dbReference>
<dbReference type="InterPro" id="IPR023531">
    <property type="entry name" value="Preprot_translocase_SecG"/>
</dbReference>
<dbReference type="InterPro" id="IPR016482">
    <property type="entry name" value="SecG/Sec61-beta/Sbh"/>
</dbReference>
<dbReference type="NCBIfam" id="NF002318">
    <property type="entry name" value="PRK01253.1"/>
    <property type="match status" value="1"/>
</dbReference>
<dbReference type="Pfam" id="PF03911">
    <property type="entry name" value="Sec61_beta"/>
    <property type="match status" value="1"/>
</dbReference>